<reference key="1">
    <citation type="journal article" date="1997" name="Nature">
        <title>The complete genome sequence of the hyperthermophilic, sulphate-reducing archaeon Archaeoglobus fulgidus.</title>
        <authorList>
            <person name="Klenk H.-P."/>
            <person name="Clayton R.A."/>
            <person name="Tomb J.-F."/>
            <person name="White O."/>
            <person name="Nelson K.E."/>
            <person name="Ketchum K.A."/>
            <person name="Dodson R.J."/>
            <person name="Gwinn M.L."/>
            <person name="Hickey E.K."/>
            <person name="Peterson J.D."/>
            <person name="Richardson D.L."/>
            <person name="Kerlavage A.R."/>
            <person name="Graham D.E."/>
            <person name="Kyrpides N.C."/>
            <person name="Fleischmann R.D."/>
            <person name="Quackenbush J."/>
            <person name="Lee N.H."/>
            <person name="Sutton G.G."/>
            <person name="Gill S.R."/>
            <person name="Kirkness E.F."/>
            <person name="Dougherty B.A."/>
            <person name="McKenney K."/>
            <person name="Adams M.D."/>
            <person name="Loftus B.J."/>
            <person name="Peterson S.N."/>
            <person name="Reich C.I."/>
            <person name="McNeil L.K."/>
            <person name="Badger J.H."/>
            <person name="Glodek A."/>
            <person name="Zhou L."/>
            <person name="Overbeek R."/>
            <person name="Gocayne J.D."/>
            <person name="Weidman J.F."/>
            <person name="McDonald L.A."/>
            <person name="Utterback T.R."/>
            <person name="Cotton M.D."/>
            <person name="Spriggs T."/>
            <person name="Artiach P."/>
            <person name="Kaine B.P."/>
            <person name="Sykes S.M."/>
            <person name="Sadow P.W."/>
            <person name="D'Andrea K.P."/>
            <person name="Bowman C."/>
            <person name="Fujii C."/>
            <person name="Garland S.A."/>
            <person name="Mason T.M."/>
            <person name="Olsen G.J."/>
            <person name="Fraser C.M."/>
            <person name="Smith H.O."/>
            <person name="Woese C.R."/>
            <person name="Venter J.C."/>
        </authorList>
    </citation>
    <scope>NUCLEOTIDE SEQUENCE [LARGE SCALE GENOMIC DNA]</scope>
    <source>
        <strain>ATCC 49558 / DSM 4304 / JCM 9628 / NBRC 100126 / VC-16</strain>
    </source>
</reference>
<keyword id="KW-0002">3D-structure</keyword>
<keyword id="KW-0067">ATP-binding</keyword>
<keyword id="KW-0173">Coenzyme A biosynthesis</keyword>
<keyword id="KW-0963">Cytoplasm</keyword>
<keyword id="KW-0547">Nucleotide-binding</keyword>
<keyword id="KW-0548">Nucleotidyltransferase</keyword>
<keyword id="KW-1185">Reference proteome</keyword>
<keyword id="KW-0808">Transferase</keyword>
<sequence>MKVALGGTFEPLHEGHKKLIDVAIKLGGRDITIGVTSDRMARARIRSVLPFAIRAENVKRYVMRKYGFEPEIVKITNPYGKTLDVDFEYLVVSPETYEMALKINQKREELGKRKITIVKVDWMMAEDGKPISSTRIKRGEIDRYGGII</sequence>
<protein>
    <recommendedName>
        <fullName evidence="1">Phosphopantetheine adenylyltransferase</fullName>
        <ecNumber evidence="1">2.7.7.3</ecNumber>
    </recommendedName>
    <alternativeName>
        <fullName evidence="1">Dephospho-CoA pyrophosphorylase</fullName>
    </alternativeName>
    <alternativeName>
        <fullName evidence="1">Pantetheine-phosphate adenylyltransferase</fullName>
        <shortName evidence="1">PPAT</shortName>
    </alternativeName>
</protein>
<comment type="function">
    <text evidence="1">Reversibly transfers an adenylyl group from ATP to 4'-phosphopantetheine, yielding dephospho-CoA (dPCoA) and pyrophosphate.</text>
</comment>
<comment type="catalytic activity">
    <reaction evidence="1">
        <text>(R)-4'-phosphopantetheine + ATP + H(+) = 3'-dephospho-CoA + diphosphate</text>
        <dbReference type="Rhea" id="RHEA:19801"/>
        <dbReference type="ChEBI" id="CHEBI:15378"/>
        <dbReference type="ChEBI" id="CHEBI:30616"/>
        <dbReference type="ChEBI" id="CHEBI:33019"/>
        <dbReference type="ChEBI" id="CHEBI:57328"/>
        <dbReference type="ChEBI" id="CHEBI:61723"/>
        <dbReference type="EC" id="2.7.7.3"/>
    </reaction>
</comment>
<comment type="pathway">
    <text evidence="1">Cofactor biosynthesis; coenzyme A biosynthesis.</text>
</comment>
<comment type="subcellular location">
    <subcellularLocation>
        <location evidence="1">Cytoplasm</location>
    </subcellularLocation>
</comment>
<comment type="similarity">
    <text evidence="1">Belongs to the eukaryotic CoaD family.</text>
</comment>
<accession>O28077</accession>
<evidence type="ECO:0000255" key="1">
    <source>
        <dbReference type="HAMAP-Rule" id="MF_00647"/>
    </source>
</evidence>
<evidence type="ECO:0007829" key="2">
    <source>
        <dbReference type="PDB" id="3DO8"/>
    </source>
</evidence>
<gene>
    <name evidence="1" type="primary">coaD</name>
    <name type="ordered locus">AF_2206</name>
</gene>
<dbReference type="EC" id="2.7.7.3" evidence="1"/>
<dbReference type="EMBL" id="AE000782">
    <property type="protein sequence ID" value="AAB89047.1"/>
    <property type="molecule type" value="Genomic_DNA"/>
</dbReference>
<dbReference type="PIR" id="F69525">
    <property type="entry name" value="F69525"/>
</dbReference>
<dbReference type="RefSeq" id="WP_010879695.1">
    <property type="nucleotide sequence ID" value="NC_000917.1"/>
</dbReference>
<dbReference type="PDB" id="3DO8">
    <property type="method" value="X-ray"/>
    <property type="resolution" value="1.60 A"/>
    <property type="chains" value="A/B=1-148"/>
</dbReference>
<dbReference type="PDBsum" id="3DO8"/>
<dbReference type="SMR" id="O28077"/>
<dbReference type="STRING" id="224325.AF_2206"/>
<dbReference type="PaxDb" id="224325-AF_2206"/>
<dbReference type="DNASU" id="1485435"/>
<dbReference type="EnsemblBacteria" id="AAB89047">
    <property type="protein sequence ID" value="AAB89047"/>
    <property type="gene ID" value="AF_2206"/>
</dbReference>
<dbReference type="KEGG" id="afu:AF_2206"/>
<dbReference type="eggNOG" id="arCOG01223">
    <property type="taxonomic scope" value="Archaea"/>
</dbReference>
<dbReference type="HOGENOM" id="CLU_035272_5_0_2"/>
<dbReference type="OrthoDB" id="53228at2157"/>
<dbReference type="PhylomeDB" id="O28077"/>
<dbReference type="UniPathway" id="UPA00241"/>
<dbReference type="EvolutionaryTrace" id="O28077"/>
<dbReference type="Proteomes" id="UP000002199">
    <property type="component" value="Chromosome"/>
</dbReference>
<dbReference type="GO" id="GO:0005737">
    <property type="term" value="C:cytoplasm"/>
    <property type="evidence" value="ECO:0007669"/>
    <property type="project" value="UniProtKB-SubCell"/>
</dbReference>
<dbReference type="GO" id="GO:0005524">
    <property type="term" value="F:ATP binding"/>
    <property type="evidence" value="ECO:0007669"/>
    <property type="project" value="UniProtKB-KW"/>
</dbReference>
<dbReference type="GO" id="GO:0004595">
    <property type="term" value="F:pantetheine-phosphate adenylyltransferase activity"/>
    <property type="evidence" value="ECO:0007669"/>
    <property type="project" value="UniProtKB-UniRule"/>
</dbReference>
<dbReference type="GO" id="GO:0015937">
    <property type="term" value="P:coenzyme A biosynthetic process"/>
    <property type="evidence" value="ECO:0007669"/>
    <property type="project" value="UniProtKB-UniRule"/>
</dbReference>
<dbReference type="CDD" id="cd02164">
    <property type="entry name" value="PPAT_CoAS"/>
    <property type="match status" value="1"/>
</dbReference>
<dbReference type="Gene3D" id="3.40.50.620">
    <property type="entry name" value="HUPs"/>
    <property type="match status" value="1"/>
</dbReference>
<dbReference type="HAMAP" id="MF_00647">
    <property type="entry name" value="PPAT_arch"/>
    <property type="match status" value="1"/>
</dbReference>
<dbReference type="InterPro" id="IPR004821">
    <property type="entry name" value="Cyt_trans-like"/>
</dbReference>
<dbReference type="InterPro" id="IPR023540">
    <property type="entry name" value="PPAT_arch"/>
</dbReference>
<dbReference type="InterPro" id="IPR014729">
    <property type="entry name" value="Rossmann-like_a/b/a_fold"/>
</dbReference>
<dbReference type="NCBIfam" id="TIGR00125">
    <property type="entry name" value="cyt_tran_rel"/>
    <property type="match status" value="1"/>
</dbReference>
<dbReference type="NCBIfam" id="NF001985">
    <property type="entry name" value="PRK00777.1"/>
    <property type="match status" value="1"/>
</dbReference>
<dbReference type="Pfam" id="PF01467">
    <property type="entry name" value="CTP_transf_like"/>
    <property type="match status" value="1"/>
</dbReference>
<dbReference type="SUPFAM" id="SSF52374">
    <property type="entry name" value="Nucleotidylyl transferase"/>
    <property type="match status" value="1"/>
</dbReference>
<organism>
    <name type="scientific">Archaeoglobus fulgidus (strain ATCC 49558 / DSM 4304 / JCM 9628 / NBRC 100126 / VC-16)</name>
    <dbReference type="NCBI Taxonomy" id="224325"/>
    <lineage>
        <taxon>Archaea</taxon>
        <taxon>Methanobacteriati</taxon>
        <taxon>Methanobacteriota</taxon>
        <taxon>Archaeoglobi</taxon>
        <taxon>Archaeoglobales</taxon>
        <taxon>Archaeoglobaceae</taxon>
        <taxon>Archaeoglobus</taxon>
    </lineage>
</organism>
<feature type="chain" id="PRO_0000156318" description="Phosphopantetheine adenylyltransferase">
    <location>
        <begin position="1"/>
        <end position="148"/>
    </location>
</feature>
<feature type="strand" evidence="2">
    <location>
        <begin position="3"/>
        <end position="7"/>
    </location>
</feature>
<feature type="helix" evidence="2">
    <location>
        <begin position="14"/>
        <end position="27"/>
    </location>
</feature>
<feature type="strand" evidence="2">
    <location>
        <begin position="31"/>
        <end position="36"/>
    </location>
</feature>
<feature type="helix" evidence="2">
    <location>
        <begin position="38"/>
        <end position="44"/>
    </location>
</feature>
<feature type="helix" evidence="2">
    <location>
        <begin position="51"/>
        <end position="66"/>
    </location>
</feature>
<feature type="strand" evidence="2">
    <location>
        <begin position="71"/>
        <end position="75"/>
    </location>
</feature>
<feature type="turn" evidence="2">
    <location>
        <begin position="78"/>
        <end position="84"/>
    </location>
</feature>
<feature type="strand" evidence="2">
    <location>
        <begin position="88"/>
        <end position="92"/>
    </location>
</feature>
<feature type="turn" evidence="2">
    <location>
        <begin position="94"/>
        <end position="96"/>
    </location>
</feature>
<feature type="helix" evidence="2">
    <location>
        <begin position="97"/>
        <end position="110"/>
    </location>
</feature>
<feature type="strand" evidence="2">
    <location>
        <begin position="116"/>
        <end position="121"/>
    </location>
</feature>
<proteinExistence type="evidence at protein level"/>
<name>COAD_ARCFU</name>